<proteinExistence type="inferred from homology"/>
<reference key="1">
    <citation type="journal article" date="2007" name="J. Bacteriol.">
        <title>Genome-wide transcriptional changes in Streptococcus gordonii in response to competence signaling peptide.</title>
        <authorList>
            <person name="Vickerman M.M."/>
            <person name="Iobst S."/>
            <person name="Jesionowski A.M."/>
            <person name="Gill S.R."/>
        </authorList>
    </citation>
    <scope>NUCLEOTIDE SEQUENCE [LARGE SCALE GENOMIC DNA]</scope>
    <source>
        <strain>Challis / ATCC 35105 / BCRC 15272 / CH1 / DL1 / V288</strain>
    </source>
</reference>
<feature type="chain" id="PRO_0000323956" description="Uridylate kinase">
    <location>
        <begin position="1"/>
        <end position="241"/>
    </location>
</feature>
<feature type="region of interest" description="Involved in allosteric activation by GTP" evidence="1">
    <location>
        <begin position="20"/>
        <end position="25"/>
    </location>
</feature>
<feature type="binding site" evidence="1">
    <location>
        <begin position="12"/>
        <end position="15"/>
    </location>
    <ligand>
        <name>ATP</name>
        <dbReference type="ChEBI" id="CHEBI:30616"/>
    </ligand>
</feature>
<feature type="binding site" evidence="1">
    <location>
        <position position="54"/>
    </location>
    <ligand>
        <name>UMP</name>
        <dbReference type="ChEBI" id="CHEBI:57865"/>
    </ligand>
</feature>
<feature type="binding site" evidence="1">
    <location>
        <position position="55"/>
    </location>
    <ligand>
        <name>ATP</name>
        <dbReference type="ChEBI" id="CHEBI:30616"/>
    </ligand>
</feature>
<feature type="binding site" evidence="1">
    <location>
        <position position="59"/>
    </location>
    <ligand>
        <name>ATP</name>
        <dbReference type="ChEBI" id="CHEBI:30616"/>
    </ligand>
</feature>
<feature type="binding site" evidence="1">
    <location>
        <position position="74"/>
    </location>
    <ligand>
        <name>UMP</name>
        <dbReference type="ChEBI" id="CHEBI:57865"/>
    </ligand>
</feature>
<feature type="binding site" evidence="1">
    <location>
        <begin position="135"/>
        <end position="142"/>
    </location>
    <ligand>
        <name>UMP</name>
        <dbReference type="ChEBI" id="CHEBI:57865"/>
    </ligand>
</feature>
<feature type="binding site" evidence="1">
    <location>
        <position position="163"/>
    </location>
    <ligand>
        <name>ATP</name>
        <dbReference type="ChEBI" id="CHEBI:30616"/>
    </ligand>
</feature>
<feature type="binding site" evidence="1">
    <location>
        <position position="169"/>
    </location>
    <ligand>
        <name>ATP</name>
        <dbReference type="ChEBI" id="CHEBI:30616"/>
    </ligand>
</feature>
<feature type="binding site" evidence="1">
    <location>
        <position position="172"/>
    </location>
    <ligand>
        <name>ATP</name>
        <dbReference type="ChEBI" id="CHEBI:30616"/>
    </ligand>
</feature>
<keyword id="KW-0021">Allosteric enzyme</keyword>
<keyword id="KW-0067">ATP-binding</keyword>
<keyword id="KW-0963">Cytoplasm</keyword>
<keyword id="KW-0418">Kinase</keyword>
<keyword id="KW-0547">Nucleotide-binding</keyword>
<keyword id="KW-0665">Pyrimidine biosynthesis</keyword>
<keyword id="KW-1185">Reference proteome</keyword>
<keyword id="KW-0808">Transferase</keyword>
<name>PYRH_STRGC</name>
<evidence type="ECO:0000255" key="1">
    <source>
        <dbReference type="HAMAP-Rule" id="MF_01220"/>
    </source>
</evidence>
<gene>
    <name evidence="1" type="primary">pyrH</name>
    <name type="ordered locus">SGO_1452</name>
</gene>
<dbReference type="EC" id="2.7.4.22" evidence="1"/>
<dbReference type="EMBL" id="CP000725">
    <property type="protein sequence ID" value="ABV11151.1"/>
    <property type="molecule type" value="Genomic_DNA"/>
</dbReference>
<dbReference type="RefSeq" id="WP_008809391.1">
    <property type="nucleotide sequence ID" value="NC_009785.1"/>
</dbReference>
<dbReference type="SMR" id="A8AY71"/>
<dbReference type="STRING" id="467705.SGO_1452"/>
<dbReference type="GeneID" id="93787714"/>
<dbReference type="KEGG" id="sgo:SGO_1452"/>
<dbReference type="eggNOG" id="COG0528">
    <property type="taxonomic scope" value="Bacteria"/>
</dbReference>
<dbReference type="HOGENOM" id="CLU_033861_0_0_9"/>
<dbReference type="UniPathway" id="UPA00159">
    <property type="reaction ID" value="UER00275"/>
</dbReference>
<dbReference type="Proteomes" id="UP000001131">
    <property type="component" value="Chromosome"/>
</dbReference>
<dbReference type="GO" id="GO:0005737">
    <property type="term" value="C:cytoplasm"/>
    <property type="evidence" value="ECO:0007669"/>
    <property type="project" value="UniProtKB-SubCell"/>
</dbReference>
<dbReference type="GO" id="GO:0005524">
    <property type="term" value="F:ATP binding"/>
    <property type="evidence" value="ECO:0007669"/>
    <property type="project" value="UniProtKB-KW"/>
</dbReference>
<dbReference type="GO" id="GO:0033862">
    <property type="term" value="F:UMP kinase activity"/>
    <property type="evidence" value="ECO:0007669"/>
    <property type="project" value="UniProtKB-EC"/>
</dbReference>
<dbReference type="GO" id="GO:0044210">
    <property type="term" value="P:'de novo' CTP biosynthetic process"/>
    <property type="evidence" value="ECO:0007669"/>
    <property type="project" value="UniProtKB-UniRule"/>
</dbReference>
<dbReference type="GO" id="GO:0006225">
    <property type="term" value="P:UDP biosynthetic process"/>
    <property type="evidence" value="ECO:0007669"/>
    <property type="project" value="TreeGrafter"/>
</dbReference>
<dbReference type="CDD" id="cd04254">
    <property type="entry name" value="AAK_UMPK-PyrH-Ec"/>
    <property type="match status" value="1"/>
</dbReference>
<dbReference type="FunFam" id="3.40.1160.10:FF:000019">
    <property type="entry name" value="Uridylate kinase"/>
    <property type="match status" value="1"/>
</dbReference>
<dbReference type="Gene3D" id="3.40.1160.10">
    <property type="entry name" value="Acetylglutamate kinase-like"/>
    <property type="match status" value="1"/>
</dbReference>
<dbReference type="HAMAP" id="MF_01220_B">
    <property type="entry name" value="PyrH_B"/>
    <property type="match status" value="1"/>
</dbReference>
<dbReference type="InterPro" id="IPR036393">
    <property type="entry name" value="AceGlu_kinase-like_sf"/>
</dbReference>
<dbReference type="InterPro" id="IPR001048">
    <property type="entry name" value="Asp/Glu/Uridylate_kinase"/>
</dbReference>
<dbReference type="InterPro" id="IPR011817">
    <property type="entry name" value="Uridylate_kinase"/>
</dbReference>
<dbReference type="InterPro" id="IPR015963">
    <property type="entry name" value="Uridylate_kinase_bac"/>
</dbReference>
<dbReference type="NCBIfam" id="TIGR02075">
    <property type="entry name" value="pyrH_bact"/>
    <property type="match status" value="1"/>
</dbReference>
<dbReference type="PANTHER" id="PTHR42833">
    <property type="entry name" value="URIDYLATE KINASE"/>
    <property type="match status" value="1"/>
</dbReference>
<dbReference type="PANTHER" id="PTHR42833:SF4">
    <property type="entry name" value="URIDYLATE KINASE PUMPKIN, CHLOROPLASTIC"/>
    <property type="match status" value="1"/>
</dbReference>
<dbReference type="Pfam" id="PF00696">
    <property type="entry name" value="AA_kinase"/>
    <property type="match status" value="1"/>
</dbReference>
<dbReference type="PIRSF" id="PIRSF005650">
    <property type="entry name" value="Uridylate_kin"/>
    <property type="match status" value="1"/>
</dbReference>
<dbReference type="SUPFAM" id="SSF53633">
    <property type="entry name" value="Carbamate kinase-like"/>
    <property type="match status" value="1"/>
</dbReference>
<comment type="function">
    <text evidence="1">Catalyzes the reversible phosphorylation of UMP to UDP.</text>
</comment>
<comment type="catalytic activity">
    <reaction evidence="1">
        <text>UMP + ATP = UDP + ADP</text>
        <dbReference type="Rhea" id="RHEA:24400"/>
        <dbReference type="ChEBI" id="CHEBI:30616"/>
        <dbReference type="ChEBI" id="CHEBI:57865"/>
        <dbReference type="ChEBI" id="CHEBI:58223"/>
        <dbReference type="ChEBI" id="CHEBI:456216"/>
        <dbReference type="EC" id="2.7.4.22"/>
    </reaction>
</comment>
<comment type="activity regulation">
    <text evidence="1">Allosterically activated by GTP. Inhibited by UTP.</text>
</comment>
<comment type="pathway">
    <text evidence="1">Pyrimidine metabolism; CTP biosynthesis via de novo pathway; UDP from UMP (UMPK route): step 1/1.</text>
</comment>
<comment type="subunit">
    <text evidence="1">Homohexamer.</text>
</comment>
<comment type="subcellular location">
    <subcellularLocation>
        <location evidence="1">Cytoplasm</location>
    </subcellularLocation>
</comment>
<comment type="similarity">
    <text evidence="1">Belongs to the UMP kinase family.</text>
</comment>
<protein>
    <recommendedName>
        <fullName evidence="1">Uridylate kinase</fullName>
        <shortName evidence="1">UK</shortName>
        <ecNumber evidence="1">2.7.4.22</ecNumber>
    </recommendedName>
    <alternativeName>
        <fullName evidence="1">Uridine monophosphate kinase</fullName>
        <shortName evidence="1">UMP kinase</shortName>
        <shortName evidence="1">UMPK</shortName>
    </alternativeName>
</protein>
<organism>
    <name type="scientific">Streptococcus gordonii (strain Challis / ATCC 35105 / BCRC 15272 / CH1 / DL1 / V288)</name>
    <dbReference type="NCBI Taxonomy" id="467705"/>
    <lineage>
        <taxon>Bacteria</taxon>
        <taxon>Bacillati</taxon>
        <taxon>Bacillota</taxon>
        <taxon>Bacilli</taxon>
        <taxon>Lactobacillales</taxon>
        <taxon>Streptococcaceae</taxon>
        <taxon>Streptococcus</taxon>
    </lineage>
</organism>
<sequence length="241" mass="25991">MVEPKYKRILIKLSGEALAGDKGVGINIQTVQKMAEEIKEVHDLGIEIALVIGGGNLWRGEPAAEAGMDRVQADYTGMLGTVMNALVMADSLQRVGVDTRVQTAIAMQQVAEPYIRGRALRHLQKGRIVIFGAGIGSPYFSTDTTAALRAAEIEADAILMAKNGVDGVYNADPKKDKTAVKFDELTHRDVISKGLRIMDSTASTLSMDNDIDLVVFNMNEAGNIKRVVFGEQIGTTVSNNL</sequence>
<accession>A8AY71</accession>